<organism>
    <name type="scientific">Triticum aestivum</name>
    <name type="common">Wheat</name>
    <dbReference type="NCBI Taxonomy" id="4565"/>
    <lineage>
        <taxon>Eukaryota</taxon>
        <taxon>Viridiplantae</taxon>
        <taxon>Streptophyta</taxon>
        <taxon>Embryophyta</taxon>
        <taxon>Tracheophyta</taxon>
        <taxon>Spermatophyta</taxon>
        <taxon>Magnoliopsida</taxon>
        <taxon>Liliopsida</taxon>
        <taxon>Poales</taxon>
        <taxon>Poaceae</taxon>
        <taxon>BOP clade</taxon>
        <taxon>Pooideae</taxon>
        <taxon>Triticodae</taxon>
        <taxon>Triticeae</taxon>
        <taxon>Triticinae</taxon>
        <taxon>Triticum</taxon>
    </lineage>
</organism>
<reference key="1">
    <citation type="journal article" date="1979" name="Can. J. Biochem.">
        <title>Structural homologies in alanine-rich acidic ribosomal proteins from procaryotes and eucaryotes.</title>
        <authorList>
            <person name="Visentin L.P."/>
            <person name="Yaguchi M."/>
            <person name="Matheson A.T."/>
        </authorList>
    </citation>
    <scope>PROTEIN SEQUENCE</scope>
    <source>
        <tissue>Germ</tissue>
    </source>
</reference>
<sequence length="42" mass="4411">MKLIAAYLLAYLGGNSSPSAADVKDILNAVGAEANEEKLEFL</sequence>
<protein>
    <recommendedName>
        <fullName evidence="2">Large ribosomal subunit protein P2</fullName>
    </recommendedName>
    <alternativeName>
        <fullName>60S acidic ribosomal protein P2</fullName>
    </alternativeName>
    <alternativeName>
        <fullName>Ribosomal protein 'A'</fullName>
    </alternativeName>
</protein>
<evidence type="ECO:0000250" key="1"/>
<evidence type="ECO:0000305" key="2"/>
<proteinExistence type="evidence at protein level"/>
<feature type="chain" id="PRO_0000157663" description="Large ribosomal subunit protein P2">
    <location>
        <begin position="1"/>
        <end position="42" status="greater than"/>
    </location>
</feature>
<feature type="sequence variant">
    <original>L</original>
    <variation>F</variation>
    <location>
        <position position="3"/>
    </location>
</feature>
<feature type="non-terminal residue">
    <location>
        <position position="42"/>
    </location>
</feature>
<name>RLA2_WHEAT</name>
<keyword id="KW-0903">Direct protein sequencing</keyword>
<keyword id="KW-0597">Phosphoprotein</keyword>
<keyword id="KW-1185">Reference proteome</keyword>
<keyword id="KW-0687">Ribonucleoprotein</keyword>
<keyword id="KW-0689">Ribosomal protein</keyword>
<comment type="function">
    <text>Plays an important role in the elongation step of protein synthesis.</text>
</comment>
<comment type="subunit">
    <text>P1 and P2 exist as dimers at the large ribosomal subunit.</text>
</comment>
<comment type="PTM">
    <text evidence="1">Phosphorylated.</text>
</comment>
<comment type="similarity">
    <text evidence="2">Belongs to the eukaryotic ribosomal protein P1/P2 family.</text>
</comment>
<dbReference type="PIR" id="S00295">
    <property type="entry name" value="S00295"/>
</dbReference>
<dbReference type="SMR" id="P05390"/>
<dbReference type="STRING" id="4565.P05390"/>
<dbReference type="PaxDb" id="4565-Traes_1AL_70F3FF07D.2"/>
<dbReference type="eggNOG" id="KOG3449">
    <property type="taxonomic scope" value="Eukaryota"/>
</dbReference>
<dbReference type="Proteomes" id="UP000019116">
    <property type="component" value="Unplaced"/>
</dbReference>
<dbReference type="GO" id="GO:0022625">
    <property type="term" value="C:cytosolic large ribosomal subunit"/>
    <property type="evidence" value="ECO:0007669"/>
    <property type="project" value="InterPro"/>
</dbReference>
<dbReference type="GO" id="GO:0003735">
    <property type="term" value="F:structural constituent of ribosome"/>
    <property type="evidence" value="ECO:0007669"/>
    <property type="project" value="InterPro"/>
</dbReference>
<dbReference type="GO" id="GO:0002182">
    <property type="term" value="P:cytoplasmic translational elongation"/>
    <property type="evidence" value="ECO:0007669"/>
    <property type="project" value="InterPro"/>
</dbReference>
<dbReference type="FunFam" id="1.10.10.1410:FF:000002">
    <property type="entry name" value="60S acidic ribosomal protein P2"/>
    <property type="match status" value="1"/>
</dbReference>
<dbReference type="Gene3D" id="1.10.10.1410">
    <property type="match status" value="1"/>
</dbReference>
<dbReference type="InterPro" id="IPR038716">
    <property type="entry name" value="P1/P2_N_sf"/>
</dbReference>
<dbReference type="InterPro" id="IPR044076">
    <property type="entry name" value="Ribosomal_P2"/>
</dbReference>
<dbReference type="PANTHER" id="PTHR21141">
    <property type="entry name" value="60S ACIDIC RIBOSOMAL PROTEIN FAMILY MEMBER"/>
    <property type="match status" value="1"/>
</dbReference>
<dbReference type="PANTHER" id="PTHR21141:SF5">
    <property type="entry name" value="LARGE RIBOSOMAL SUBUNIT PROTEIN P2"/>
    <property type="match status" value="1"/>
</dbReference>
<accession>P05390</accession>